<reference key="1">
    <citation type="journal article" date="2007" name="Nat. Genet.">
        <title>Genomic analysis of Bartonella identifies type IV secretion systems as host adaptability factors.</title>
        <authorList>
            <person name="Saenz H.L."/>
            <person name="Engel P."/>
            <person name="Stoeckli M.C."/>
            <person name="Lanz C."/>
            <person name="Raddatz G."/>
            <person name="Vayssier-Taussat M."/>
            <person name="Birtles R."/>
            <person name="Schuster S.C."/>
            <person name="Dehio C."/>
        </authorList>
    </citation>
    <scope>NUCLEOTIDE SEQUENCE [LARGE SCALE GENOMIC DNA]</scope>
    <source>
        <strain>CIP 105476 / IBS 506</strain>
    </source>
</reference>
<evidence type="ECO:0000255" key="1">
    <source>
        <dbReference type="HAMAP-Rule" id="MF_00440"/>
    </source>
</evidence>
<feature type="chain" id="PRO_1000080714" description="Transcriptional repressor NrdR">
    <location>
        <begin position="1"/>
        <end position="160"/>
    </location>
</feature>
<feature type="domain" description="ATP-cone" evidence="1">
    <location>
        <begin position="49"/>
        <end position="139"/>
    </location>
</feature>
<feature type="zinc finger region" evidence="1">
    <location>
        <begin position="3"/>
        <end position="34"/>
    </location>
</feature>
<dbReference type="EMBL" id="AM260525">
    <property type="protein sequence ID" value="CAK01681.1"/>
    <property type="molecule type" value="Genomic_DNA"/>
</dbReference>
<dbReference type="RefSeq" id="WP_012231863.1">
    <property type="nucleotide sequence ID" value="NC_010161.1"/>
</dbReference>
<dbReference type="SMR" id="A9IVC4"/>
<dbReference type="KEGG" id="btr:BT_1317"/>
<dbReference type="eggNOG" id="COG1327">
    <property type="taxonomic scope" value="Bacteria"/>
</dbReference>
<dbReference type="HOGENOM" id="CLU_108412_0_1_5"/>
<dbReference type="Proteomes" id="UP000001592">
    <property type="component" value="Chromosome"/>
</dbReference>
<dbReference type="GO" id="GO:0005524">
    <property type="term" value="F:ATP binding"/>
    <property type="evidence" value="ECO:0007669"/>
    <property type="project" value="UniProtKB-KW"/>
</dbReference>
<dbReference type="GO" id="GO:0003677">
    <property type="term" value="F:DNA binding"/>
    <property type="evidence" value="ECO:0007669"/>
    <property type="project" value="UniProtKB-KW"/>
</dbReference>
<dbReference type="GO" id="GO:0008270">
    <property type="term" value="F:zinc ion binding"/>
    <property type="evidence" value="ECO:0007669"/>
    <property type="project" value="UniProtKB-UniRule"/>
</dbReference>
<dbReference type="GO" id="GO:0045892">
    <property type="term" value="P:negative regulation of DNA-templated transcription"/>
    <property type="evidence" value="ECO:0007669"/>
    <property type="project" value="UniProtKB-UniRule"/>
</dbReference>
<dbReference type="HAMAP" id="MF_00440">
    <property type="entry name" value="NrdR"/>
    <property type="match status" value="1"/>
</dbReference>
<dbReference type="InterPro" id="IPR005144">
    <property type="entry name" value="ATP-cone_dom"/>
</dbReference>
<dbReference type="InterPro" id="IPR055173">
    <property type="entry name" value="NrdR-like_N"/>
</dbReference>
<dbReference type="InterPro" id="IPR003796">
    <property type="entry name" value="RNR_NrdR-like"/>
</dbReference>
<dbReference type="NCBIfam" id="TIGR00244">
    <property type="entry name" value="transcriptional regulator NrdR"/>
    <property type="match status" value="1"/>
</dbReference>
<dbReference type="PANTHER" id="PTHR30455">
    <property type="entry name" value="TRANSCRIPTIONAL REPRESSOR NRDR"/>
    <property type="match status" value="1"/>
</dbReference>
<dbReference type="PANTHER" id="PTHR30455:SF2">
    <property type="entry name" value="TRANSCRIPTIONAL REPRESSOR NRDR"/>
    <property type="match status" value="1"/>
</dbReference>
<dbReference type="Pfam" id="PF03477">
    <property type="entry name" value="ATP-cone"/>
    <property type="match status" value="1"/>
</dbReference>
<dbReference type="Pfam" id="PF22811">
    <property type="entry name" value="Zn_ribbon_NrdR"/>
    <property type="match status" value="1"/>
</dbReference>
<dbReference type="PROSITE" id="PS51161">
    <property type="entry name" value="ATP_CONE"/>
    <property type="match status" value="1"/>
</dbReference>
<accession>A9IVC4</accession>
<name>NRDR_BART1</name>
<keyword id="KW-0067">ATP-binding</keyword>
<keyword id="KW-0238">DNA-binding</keyword>
<keyword id="KW-0479">Metal-binding</keyword>
<keyword id="KW-0547">Nucleotide-binding</keyword>
<keyword id="KW-0678">Repressor</keyword>
<keyword id="KW-0804">Transcription</keyword>
<keyword id="KW-0805">Transcription regulation</keyword>
<keyword id="KW-0862">Zinc</keyword>
<keyword id="KW-0863">Zinc-finger</keyword>
<comment type="function">
    <text evidence="1">Negatively regulates transcription of bacterial ribonucleotide reductase nrd genes and operons by binding to NrdR-boxes.</text>
</comment>
<comment type="cofactor">
    <cofactor evidence="1">
        <name>Zn(2+)</name>
        <dbReference type="ChEBI" id="CHEBI:29105"/>
    </cofactor>
    <text evidence="1">Binds 1 zinc ion.</text>
</comment>
<comment type="similarity">
    <text evidence="1">Belongs to the NrdR family.</text>
</comment>
<proteinExistence type="inferred from homology"/>
<protein>
    <recommendedName>
        <fullName evidence="1">Transcriptional repressor NrdR</fullName>
    </recommendedName>
</protein>
<sequence length="160" mass="18459">MRCPYCQYEDTQVKDSRPAEEGAVIRRRRVCSVCGGRFTTFERVQLRELLITKKNGRCEPFDRDKLMRSVDVAVRKRNIDPDRIEQAISGIVRQLESLGEPEIASEKIGHLVMEALKGIDDIAYIRFASVYRDFRNASDFHDIIDELSKGIADTESRFDE</sequence>
<gene>
    <name evidence="1" type="primary">nrdR</name>
    <name type="ordered locus">BT_1317</name>
</gene>
<organism>
    <name type="scientific">Bartonella tribocorum (strain CIP 105476 / IBS 506)</name>
    <dbReference type="NCBI Taxonomy" id="382640"/>
    <lineage>
        <taxon>Bacteria</taxon>
        <taxon>Pseudomonadati</taxon>
        <taxon>Pseudomonadota</taxon>
        <taxon>Alphaproteobacteria</taxon>
        <taxon>Hyphomicrobiales</taxon>
        <taxon>Bartonellaceae</taxon>
        <taxon>Bartonella</taxon>
    </lineage>
</organism>